<feature type="chain" id="PRO_0000103944" description="Uncharacterized protein Mb2093c">
    <location>
        <begin position="1"/>
        <end position="407"/>
    </location>
</feature>
<reference key="1">
    <citation type="journal article" date="2003" name="Proc. Natl. Acad. Sci. U.S.A.">
        <title>The complete genome sequence of Mycobacterium bovis.</title>
        <authorList>
            <person name="Garnier T."/>
            <person name="Eiglmeier K."/>
            <person name="Camus J.-C."/>
            <person name="Medina N."/>
            <person name="Mansoor H."/>
            <person name="Pryor M."/>
            <person name="Duthoy S."/>
            <person name="Grondin S."/>
            <person name="Lacroix C."/>
            <person name="Monsempe C."/>
            <person name="Simon S."/>
            <person name="Harris B."/>
            <person name="Atkin R."/>
            <person name="Doggett J."/>
            <person name="Mayes R."/>
            <person name="Keating L."/>
            <person name="Wheeler P.R."/>
            <person name="Parkhill J."/>
            <person name="Barrell B.G."/>
            <person name="Cole S.T."/>
            <person name="Gordon S.V."/>
            <person name="Hewinson R.G."/>
        </authorList>
    </citation>
    <scope>NUCLEOTIDE SEQUENCE [LARGE SCALE GENOMIC DNA]</scope>
    <source>
        <strain>ATCC BAA-935 / AF2122/97</strain>
    </source>
</reference>
<reference key="2">
    <citation type="journal article" date="2017" name="Genome Announc.">
        <title>Updated reference genome sequence and annotation of Mycobacterium bovis AF2122/97.</title>
        <authorList>
            <person name="Malone K.M."/>
            <person name="Farrell D."/>
            <person name="Stuber T.P."/>
            <person name="Schubert O.T."/>
            <person name="Aebersold R."/>
            <person name="Robbe-Austerman S."/>
            <person name="Gordon S.V."/>
        </authorList>
    </citation>
    <scope>NUCLEOTIDE SEQUENCE [LARGE SCALE GENOMIC DNA]</scope>
    <scope>GENOME REANNOTATION</scope>
    <source>
        <strain>ATCC BAA-935 / AF2122/97</strain>
    </source>
</reference>
<gene>
    <name type="ordered locus">BQ2027_MB2093C</name>
</gene>
<proteinExistence type="predicted"/>
<accession>P0A5G2</accession>
<accession>A0A1R3Y061</accession>
<accession>Q10678</accession>
<accession>X2BJY9</accession>
<keyword id="KW-1185">Reference proteome</keyword>
<sequence>MTDDHPRADIVSRQYHRWLYPHPIADLEAWTTANWEWFDPVHSHRILWPDREYRPDLDILIAGCGTNQAAIFAFTNRAAKVVAIDISRPALDHQQYLKDKHGLANLELHLLPIEELATLGRDFDLVVSTGVLHHLADPRAGMKELAHCLRRDGVVAAMLYGKYGRIGVELLGSVFRDLGLGQDDASIKLAKEAISLLPTYHPLRNYLTKARDLLSDSALVDTFLHGRQRSYTVEECVDLVTSAGLVFQGWFHKAPYYPHDFFVPNSEFYAAVNTLPEVKAWSVMERLETLNATHLFMACRRDRPKEQYTIDFSTVAALDYVPLMRTRCGVSGTDMFWPGWRMAPSPAQLAFLQQVDGRRTIREIAGCVARTGEPSGGSLADLEEFGRKLFQSLWRLDFVAVALPASG</sequence>
<name>Y2093_MYCBO</name>
<protein>
    <recommendedName>
        <fullName>Uncharacterized protein Mb2093c</fullName>
    </recommendedName>
</protein>
<dbReference type="EMBL" id="LT708304">
    <property type="protein sequence ID" value="SIU00700.1"/>
    <property type="molecule type" value="Genomic_DNA"/>
</dbReference>
<dbReference type="RefSeq" id="NP_855743.1">
    <property type="nucleotide sequence ID" value="NC_002945.3"/>
</dbReference>
<dbReference type="RefSeq" id="WP_003901321.1">
    <property type="nucleotide sequence ID" value="NC_002945.4"/>
</dbReference>
<dbReference type="SMR" id="P0A5G2"/>
<dbReference type="KEGG" id="mbo:BQ2027_MB2093C"/>
<dbReference type="PATRIC" id="fig|233413.5.peg.2301"/>
<dbReference type="Proteomes" id="UP000001419">
    <property type="component" value="Chromosome"/>
</dbReference>
<dbReference type="CDD" id="cd02440">
    <property type="entry name" value="AdoMet_MTases"/>
    <property type="match status" value="1"/>
</dbReference>
<dbReference type="FunFam" id="3.40.50.150:FF:000515">
    <property type="entry name" value="Asparaginyl-tRNA synthetase"/>
    <property type="match status" value="1"/>
</dbReference>
<dbReference type="Gene3D" id="3.40.50.150">
    <property type="entry name" value="Vaccinia Virus protein VP39"/>
    <property type="match status" value="1"/>
</dbReference>
<dbReference type="InterPro" id="IPR013217">
    <property type="entry name" value="Methyltransf_12"/>
</dbReference>
<dbReference type="InterPro" id="IPR029063">
    <property type="entry name" value="SAM-dependent_MTases_sf"/>
</dbReference>
<dbReference type="Pfam" id="PF08242">
    <property type="entry name" value="Methyltransf_12"/>
    <property type="match status" value="1"/>
</dbReference>
<dbReference type="SUPFAM" id="SSF53335">
    <property type="entry name" value="S-adenosyl-L-methionine-dependent methyltransferases"/>
    <property type="match status" value="1"/>
</dbReference>
<organism>
    <name type="scientific">Mycobacterium bovis (strain ATCC BAA-935 / AF2122/97)</name>
    <dbReference type="NCBI Taxonomy" id="233413"/>
    <lineage>
        <taxon>Bacteria</taxon>
        <taxon>Bacillati</taxon>
        <taxon>Actinomycetota</taxon>
        <taxon>Actinomycetes</taxon>
        <taxon>Mycobacteriales</taxon>
        <taxon>Mycobacteriaceae</taxon>
        <taxon>Mycobacterium</taxon>
        <taxon>Mycobacterium tuberculosis complex</taxon>
    </lineage>
</organism>